<dbReference type="EMBL" id="AB001684">
    <property type="protein sequence ID" value="BAA57904.1"/>
    <property type="molecule type" value="Genomic_DNA"/>
</dbReference>
<dbReference type="PIR" id="T07257">
    <property type="entry name" value="T07257"/>
</dbReference>
<dbReference type="RefSeq" id="NP_045829.1">
    <property type="nucleotide sequence ID" value="NC_001865.1"/>
</dbReference>
<dbReference type="SMR" id="P56309"/>
<dbReference type="GeneID" id="809102"/>
<dbReference type="GO" id="GO:0009535">
    <property type="term" value="C:chloroplast thylakoid membrane"/>
    <property type="evidence" value="ECO:0007669"/>
    <property type="project" value="UniProtKB-SubCell"/>
</dbReference>
<dbReference type="GO" id="GO:0009539">
    <property type="term" value="C:photosystem II reaction center"/>
    <property type="evidence" value="ECO:0007669"/>
    <property type="project" value="InterPro"/>
</dbReference>
<dbReference type="GO" id="GO:0009055">
    <property type="term" value="F:electron transfer activity"/>
    <property type="evidence" value="ECO:0007669"/>
    <property type="project" value="UniProtKB-UniRule"/>
</dbReference>
<dbReference type="GO" id="GO:0020037">
    <property type="term" value="F:heme binding"/>
    <property type="evidence" value="ECO:0007669"/>
    <property type="project" value="InterPro"/>
</dbReference>
<dbReference type="GO" id="GO:0005506">
    <property type="term" value="F:iron ion binding"/>
    <property type="evidence" value="ECO:0007669"/>
    <property type="project" value="UniProtKB-UniRule"/>
</dbReference>
<dbReference type="GO" id="GO:0009767">
    <property type="term" value="P:photosynthetic electron transport chain"/>
    <property type="evidence" value="ECO:0007669"/>
    <property type="project" value="InterPro"/>
</dbReference>
<dbReference type="Gene3D" id="1.20.5.860">
    <property type="entry name" value="Photosystem II cytochrome b559, alpha subunit"/>
    <property type="match status" value="1"/>
</dbReference>
<dbReference type="HAMAP" id="MF_00642">
    <property type="entry name" value="PSII_PsbE"/>
    <property type="match status" value="1"/>
</dbReference>
<dbReference type="InterPro" id="IPR006217">
    <property type="entry name" value="PSII_cyt_b559_asu"/>
</dbReference>
<dbReference type="InterPro" id="IPR037025">
    <property type="entry name" value="PSII_cyt_b559_asu_sf"/>
</dbReference>
<dbReference type="InterPro" id="IPR006216">
    <property type="entry name" value="PSII_cyt_b559_CS"/>
</dbReference>
<dbReference type="InterPro" id="IPR013081">
    <property type="entry name" value="PSII_cyt_b559_N"/>
</dbReference>
<dbReference type="InterPro" id="IPR013082">
    <property type="entry name" value="PSII_cytb559_asu_lum"/>
</dbReference>
<dbReference type="NCBIfam" id="TIGR01332">
    <property type="entry name" value="cyt_b559_alpha"/>
    <property type="match status" value="1"/>
</dbReference>
<dbReference type="PANTHER" id="PTHR33391">
    <property type="entry name" value="CYTOCHROME B559 SUBUNIT BETA-RELATED"/>
    <property type="match status" value="1"/>
</dbReference>
<dbReference type="PANTHER" id="PTHR33391:SF9">
    <property type="entry name" value="CYTOCHROME B559 SUBUNIT BETA-RELATED"/>
    <property type="match status" value="1"/>
</dbReference>
<dbReference type="Pfam" id="PF00283">
    <property type="entry name" value="Cytochrom_B559"/>
    <property type="match status" value="1"/>
</dbReference>
<dbReference type="Pfam" id="PF00284">
    <property type="entry name" value="Cytochrom_B559a"/>
    <property type="match status" value="1"/>
</dbReference>
<dbReference type="PIRSF" id="PIRSF000036">
    <property type="entry name" value="PsbE"/>
    <property type="match status" value="1"/>
</dbReference>
<dbReference type="SUPFAM" id="SSF161045">
    <property type="entry name" value="Cytochrome b559 subunits"/>
    <property type="match status" value="1"/>
</dbReference>
<dbReference type="PROSITE" id="PS00537">
    <property type="entry name" value="CYTOCHROME_B559"/>
    <property type="match status" value="1"/>
</dbReference>
<organism>
    <name type="scientific">Chlorella vulgaris</name>
    <name type="common">Green alga</name>
    <dbReference type="NCBI Taxonomy" id="3077"/>
    <lineage>
        <taxon>Eukaryota</taxon>
        <taxon>Viridiplantae</taxon>
        <taxon>Chlorophyta</taxon>
        <taxon>core chlorophytes</taxon>
        <taxon>Trebouxiophyceae</taxon>
        <taxon>Chlorellales</taxon>
        <taxon>Chlorellaceae</taxon>
        <taxon>Chlorella clade</taxon>
        <taxon>Chlorella</taxon>
    </lineage>
</organism>
<accession>P56309</accession>
<reference key="1">
    <citation type="journal article" date="1997" name="Proc. Natl. Acad. Sci. U.S.A.">
        <title>Complete nucleotide sequence of the chloroplast genome from the green alga Chlorella vulgaris: the existence of genes possibly involved in chloroplast division.</title>
        <authorList>
            <person name="Wakasugi T."/>
            <person name="Nagai T."/>
            <person name="Kapoor M."/>
            <person name="Sugita M."/>
            <person name="Ito M."/>
            <person name="Ito S."/>
            <person name="Tsudzuki J."/>
            <person name="Nakashima K."/>
            <person name="Tsudzuki T."/>
            <person name="Suzuki Y."/>
            <person name="Hamada A."/>
            <person name="Ohta T."/>
            <person name="Inamura A."/>
            <person name="Yoshinaga K."/>
            <person name="Sugiura M."/>
        </authorList>
    </citation>
    <scope>NUCLEOTIDE SEQUENCE [LARGE SCALE GENOMIC DNA]</scope>
    <source>
        <strain>IAM C-27 / Tamiya</strain>
    </source>
</reference>
<evidence type="ECO:0000255" key="1">
    <source>
        <dbReference type="HAMAP-Rule" id="MF_00642"/>
    </source>
</evidence>
<gene>
    <name evidence="1" type="primary">psbE</name>
</gene>
<name>PSBE_CHLVU</name>
<protein>
    <recommendedName>
        <fullName evidence="1">Cytochrome b559 subunit alpha</fullName>
    </recommendedName>
    <alternativeName>
        <fullName evidence="1">PSII reaction center subunit V</fullName>
    </alternativeName>
</protein>
<proteinExistence type="inferred from homology"/>
<feature type="chain" id="PRO_0000200303" description="Cytochrome b559 subunit alpha">
    <location>
        <begin position="1"/>
        <end position="83"/>
    </location>
</feature>
<feature type="transmembrane region" description="Helical" evidence="1">
    <location>
        <begin position="21"/>
        <end position="35"/>
    </location>
</feature>
<feature type="binding site" description="axial binding residue" evidence="1">
    <location>
        <position position="23"/>
    </location>
    <ligand>
        <name>heme</name>
        <dbReference type="ChEBI" id="CHEBI:30413"/>
        <note>ligand shared with beta subunit</note>
    </ligand>
    <ligandPart>
        <name>Fe</name>
        <dbReference type="ChEBI" id="CHEBI:18248"/>
    </ligandPart>
</feature>
<comment type="function">
    <text evidence="1">This b-type cytochrome is tightly associated with the reaction center of photosystem II (PSII). PSII is a light-driven water:plastoquinone oxidoreductase that uses light energy to abstract electrons from H(2)O, generating O(2) and a proton gradient subsequently used for ATP formation. It consists of a core antenna complex that captures photons, and an electron transfer chain that converts photonic excitation into a charge separation.</text>
</comment>
<comment type="cofactor">
    <cofactor evidence="1">
        <name>heme b</name>
        <dbReference type="ChEBI" id="CHEBI:60344"/>
    </cofactor>
    <text evidence="1">With its partner (PsbF) binds heme. PSII binds additional chlorophylls, carotenoids and specific lipids.</text>
</comment>
<comment type="subunit">
    <text evidence="1">Heterodimer of an alpha subunit and a beta subunit. PSII is composed of 1 copy each of membrane proteins PsbA, PsbB, PsbC, PsbD, PsbE, PsbF, PsbH, PsbI, PsbJ, PsbK, PsbL, PsbM, PsbT, PsbX, PsbY, PsbZ, Psb30/Ycf12, at least 3 peripheral proteins of the oxygen-evolving complex and a large number of cofactors. It forms dimeric complexes.</text>
</comment>
<comment type="subcellular location">
    <subcellularLocation>
        <location evidence="1">Plastid</location>
        <location evidence="1">Chloroplast thylakoid membrane</location>
        <topology evidence="1">Single-pass membrane protein</topology>
    </subcellularLocation>
</comment>
<comment type="similarity">
    <text evidence="1">Belongs to the PsbE/PsbF family.</text>
</comment>
<sequence>MSGATGERPFSDILTSIRYWVIHSITIPSLFIAGWLFVSTGLAYDVFGSPRPNEYFTEDRQETPLITDRFNALEQVKKFSEVN</sequence>
<keyword id="KW-0150">Chloroplast</keyword>
<keyword id="KW-0249">Electron transport</keyword>
<keyword id="KW-0349">Heme</keyword>
<keyword id="KW-0408">Iron</keyword>
<keyword id="KW-0472">Membrane</keyword>
<keyword id="KW-0479">Metal-binding</keyword>
<keyword id="KW-0602">Photosynthesis</keyword>
<keyword id="KW-0604">Photosystem II</keyword>
<keyword id="KW-0934">Plastid</keyword>
<keyword id="KW-0793">Thylakoid</keyword>
<keyword id="KW-0812">Transmembrane</keyword>
<keyword id="KW-1133">Transmembrane helix</keyword>
<keyword id="KW-0813">Transport</keyword>
<geneLocation type="chloroplast"/>